<comment type="function">
    <text evidence="2">Plays an essential role in viral RNA transcription and replication by forming the heterotrimeric polymerase complex together with PB1 and PB2 subunits. The complex transcribes viral mRNAs by using a unique mechanism called cap-snatching. It consists in the hijacking and cleavage of host capped pre-mRNAs. These short capped RNAs are then used as primers for viral mRNAs. The PB2 subunit is responsible for the binding of the 5' cap of cellular pre-mRNAs which are subsequently cleaved after 10-13 nucleotides by the PA subunit that carries the endonuclease activity.</text>
</comment>
<comment type="cofactor">
    <cofactor evidence="2">
        <name>Mn(2+)</name>
        <dbReference type="ChEBI" id="CHEBI:29035"/>
    </cofactor>
    <text evidence="2">Binds 2 manganese ions per subunit.</text>
</comment>
<comment type="subunit">
    <text evidence="1 2">Influenza RNA polymerase is composed of three subunits: PB1, PB2 and PA. Interacts (via C-terminus) with PB1 (via N-terminus).</text>
</comment>
<comment type="subcellular location">
    <subcellularLocation>
        <location evidence="2">Host cytoplasm</location>
    </subcellularLocation>
    <subcellularLocation>
        <location evidence="2">Host nucleus</location>
    </subcellularLocation>
    <text evidence="1 2">PB1 and PA are transported in the host nucleus as a complex.</text>
</comment>
<comment type="alternative products">
    <event type="ribosomal frameshifting"/>
    <isoform>
        <id>P31342-1</id>
        <name>PA</name>
        <sequence type="displayed"/>
    </isoform>
    <isoform>
        <id>P0DJS8-1</id>
        <name>PA-X</name>
        <sequence type="external"/>
    </isoform>
</comment>
<comment type="PTM">
    <text evidence="1 2">Phosphorylated on serines and threonines by host kinases, including human casein kinase II.</text>
</comment>
<comment type="similarity">
    <text evidence="2">Belongs to the influenza viruses PA family.</text>
</comment>
<dbReference type="EC" id="3.1.-.-" evidence="2"/>
<dbReference type="EMBL" id="AJ243994">
    <property type="protein sequence ID" value="CAB56290.1"/>
    <property type="molecule type" value="mRNA"/>
</dbReference>
<dbReference type="SMR" id="P31342"/>
<dbReference type="MEROPS" id="S62.001"/>
<dbReference type="Proteomes" id="UP000098172">
    <property type="component" value="Genome"/>
</dbReference>
<dbReference type="GO" id="GO:0030430">
    <property type="term" value="C:host cell cytoplasm"/>
    <property type="evidence" value="ECO:0007669"/>
    <property type="project" value="UniProtKB-SubCell"/>
</dbReference>
<dbReference type="GO" id="GO:0042025">
    <property type="term" value="C:host cell nucleus"/>
    <property type="evidence" value="ECO:0007669"/>
    <property type="project" value="UniProtKB-SubCell"/>
</dbReference>
<dbReference type="GO" id="GO:0004519">
    <property type="term" value="F:endonuclease activity"/>
    <property type="evidence" value="ECO:0007669"/>
    <property type="project" value="UniProtKB-KW"/>
</dbReference>
<dbReference type="GO" id="GO:0046872">
    <property type="term" value="F:metal ion binding"/>
    <property type="evidence" value="ECO:0007669"/>
    <property type="project" value="UniProtKB-KW"/>
</dbReference>
<dbReference type="GO" id="GO:0003723">
    <property type="term" value="F:RNA binding"/>
    <property type="evidence" value="ECO:0007669"/>
    <property type="project" value="UniProtKB-UniRule"/>
</dbReference>
<dbReference type="GO" id="GO:0075526">
    <property type="term" value="P:cap snatching"/>
    <property type="evidence" value="ECO:0007669"/>
    <property type="project" value="UniProtKB-UniRule"/>
</dbReference>
<dbReference type="GO" id="GO:0006351">
    <property type="term" value="P:DNA-templated transcription"/>
    <property type="evidence" value="ECO:0007669"/>
    <property type="project" value="UniProtKB-UniRule"/>
</dbReference>
<dbReference type="GO" id="GO:0039657">
    <property type="term" value="P:symbiont-mediated suppression of host gene expression"/>
    <property type="evidence" value="ECO:0007669"/>
    <property type="project" value="UniProtKB-KW"/>
</dbReference>
<dbReference type="GO" id="GO:0039523">
    <property type="term" value="P:symbiont-mediated suppression of host mRNA transcription via inhibition of RNA polymerase II activity"/>
    <property type="evidence" value="ECO:0007669"/>
    <property type="project" value="UniProtKB-UniRule"/>
</dbReference>
<dbReference type="GO" id="GO:0039694">
    <property type="term" value="P:viral RNA genome replication"/>
    <property type="evidence" value="ECO:0007669"/>
    <property type="project" value="InterPro"/>
</dbReference>
<dbReference type="GO" id="GO:0075523">
    <property type="term" value="P:viral translational frameshifting"/>
    <property type="evidence" value="ECO:0007669"/>
    <property type="project" value="UniProtKB-KW"/>
</dbReference>
<dbReference type="FunFam" id="3.40.91.90:FF:000001">
    <property type="entry name" value="Polymerase acidic protein"/>
    <property type="match status" value="1"/>
</dbReference>
<dbReference type="Gene3D" id="3.40.91.90">
    <property type="entry name" value="Influenza RNA-dependent RNA polymerase subunit PA, endonuclease domain"/>
    <property type="match status" value="1"/>
</dbReference>
<dbReference type="HAMAP" id="MF_04063">
    <property type="entry name" value="INFV_PA"/>
    <property type="match status" value="1"/>
</dbReference>
<dbReference type="InterPro" id="IPR037534">
    <property type="entry name" value="INFV_PA"/>
</dbReference>
<dbReference type="InterPro" id="IPR001009">
    <property type="entry name" value="PA/PA-X"/>
</dbReference>
<dbReference type="InterPro" id="IPR038372">
    <property type="entry name" value="PA/PA-X_sf"/>
</dbReference>
<dbReference type="Pfam" id="PF00603">
    <property type="entry name" value="Flu_PA"/>
    <property type="match status" value="1"/>
</dbReference>
<reference key="1">
    <citation type="journal article" date="1989" name="Virus Res.">
        <title>Nucleotide sequence of the avian influenza A/Mallard/NY/6750/78 virus polymerase genes.</title>
        <authorList>
            <person name="Treanor J."/>
            <person name="Kawaoka Y."/>
            <person name="Miller R."/>
            <person name="Webster R.G."/>
            <person name="Murphy B."/>
        </authorList>
    </citation>
    <scope>NUCLEOTIDE SEQUENCE</scope>
</reference>
<reference key="2">
    <citation type="journal article" date="2000" name="J. Gen. Virol.">
        <title>Genetic analysis of the compatibility between polymerase proteins from human and avian strains of influenza A viruses.</title>
        <authorList>
            <person name="Naffakh N."/>
            <person name="Massin P."/>
            <person name="Escriou N."/>
            <person name="Crescenzo-Chaigne B."/>
            <person name="van der Werf S."/>
        </authorList>
    </citation>
    <scope>NUCLEOTIDE SEQUENCE [MRNA]</scope>
</reference>
<gene>
    <name evidence="2" type="primary">PA</name>
</gene>
<accession>P31342</accession>
<accession>Q9PY87</accession>
<protein>
    <recommendedName>
        <fullName evidence="2">Polymerase acidic protein</fullName>
        <ecNumber evidence="2">3.1.-.-</ecNumber>
    </recommendedName>
    <alternativeName>
        <fullName evidence="2">RNA-directed RNA polymerase subunit P2</fullName>
    </alternativeName>
</protein>
<organism>
    <name type="scientific">Influenza A virus (strain A/Mallard/New York/6750/1978 H2N2)</name>
    <dbReference type="NCBI Taxonomy" id="384502"/>
    <lineage>
        <taxon>Viruses</taxon>
        <taxon>Riboviria</taxon>
        <taxon>Orthornavirae</taxon>
        <taxon>Negarnaviricota</taxon>
        <taxon>Polyploviricotina</taxon>
        <taxon>Insthoviricetes</taxon>
        <taxon>Articulavirales</taxon>
        <taxon>Orthomyxoviridae</taxon>
        <taxon>Alphainfluenzavirus</taxon>
        <taxon>Alphainfluenzavirus influenzae</taxon>
        <taxon>Influenza A virus</taxon>
    </lineage>
</organism>
<feature type="chain" id="PRO_0000078793" description="Polymerase acidic protein">
    <location>
        <begin position="1"/>
        <end position="716"/>
    </location>
</feature>
<feature type="short sequence motif" description="Nuclear localization signal 1 (NLS1)" evidence="1 2">
    <location>
        <begin position="124"/>
        <end position="139"/>
    </location>
</feature>
<feature type="short sequence motif" description="Nuclear localization signal 2 (NLS2)" evidence="1 2">
    <location>
        <begin position="184"/>
        <end position="247"/>
    </location>
</feature>
<feature type="binding site" evidence="2">
    <location>
        <position position="41"/>
    </location>
    <ligand>
        <name>Mn(2+)</name>
        <dbReference type="ChEBI" id="CHEBI:29035"/>
        <label>1</label>
    </ligand>
</feature>
<feature type="binding site" evidence="2">
    <location>
        <position position="80"/>
    </location>
    <ligand>
        <name>Mn(2+)</name>
        <dbReference type="ChEBI" id="CHEBI:29035"/>
        <label>2</label>
    </ligand>
</feature>
<feature type="binding site" evidence="2">
    <location>
        <position position="108"/>
    </location>
    <ligand>
        <name>Mn(2+)</name>
        <dbReference type="ChEBI" id="CHEBI:29035"/>
        <label>1</label>
    </ligand>
</feature>
<feature type="binding site" evidence="2">
    <location>
        <position position="108"/>
    </location>
    <ligand>
        <name>Mn(2+)</name>
        <dbReference type="ChEBI" id="CHEBI:29035"/>
        <label>2</label>
    </ligand>
</feature>
<feature type="binding site" evidence="2">
    <location>
        <position position="119"/>
    </location>
    <ligand>
        <name>Mn(2+)</name>
        <dbReference type="ChEBI" id="CHEBI:29035"/>
        <label>1</label>
    </ligand>
</feature>
<feature type="binding site" evidence="2">
    <location>
        <position position="120"/>
    </location>
    <ligand>
        <name>Mn(2+)</name>
        <dbReference type="ChEBI" id="CHEBI:29035"/>
        <label>1</label>
    </ligand>
</feature>
<feature type="sequence conflict" description="In Ref. 2; CAB56290." ref="2">
    <original>AQS</original>
    <variation>RQC</variation>
    <location>
        <begin position="6"/>
        <end position="8"/>
    </location>
</feature>
<feature type="sequence conflict" description="In Ref. 2; CAB56290." ref="2">
    <original>D</original>
    <variation>E</variation>
    <location>
        <position position="272"/>
    </location>
</feature>
<feature type="sequence conflict" description="In Ref. 2; CAB56290." ref="2">
    <original>T</original>
    <variation>N</variation>
    <location>
        <position position="519"/>
    </location>
</feature>
<feature type="sequence conflict" description="In Ref. 2; CAB56290." ref="2">
    <original>RS</original>
    <variation>KY</variation>
    <location>
        <begin position="539"/>
        <end position="540"/>
    </location>
</feature>
<feature type="sequence conflict" description="In Ref. 2; CAB56290." ref="2">
    <original>AP</original>
    <variation>VS</variation>
    <location>
        <begin position="557"/>
        <end position="558"/>
    </location>
</feature>
<feature type="sequence conflict" description="In Ref. 2; CAB56290." ref="2">
    <original>T</original>
    <variation>M</variation>
    <location>
        <position position="561"/>
    </location>
</feature>
<feature type="sequence conflict" description="In Ref. 2; CAB56290." ref="2">
    <original>T</original>
    <variation>M</variation>
    <location>
        <position position="581"/>
    </location>
</feature>
<feature type="sequence conflict" description="In Ref. 2; CAB56290." ref="2">
    <original>PHL</original>
    <variation>LQS</variation>
    <location>
        <begin position="586"/>
        <end position="588"/>
    </location>
</feature>
<proteinExistence type="evidence at transcript level"/>
<sequence length="716" mass="82300">MEDFVAQSFNPMIVELAEKAMKEYGEDPKIETNKFAAICTHLEVCFMYSDFHFIDERGESIIVESGDPNALLKHRFEIIEGRDRTMAWTVVNSICNTTGVEKPKFLPDLYDYKENRFIEIGVTRREVHIYYLEKANKIKSEKTHIHIFSFTGEEMATKADYTLDEESRARIKTRLFTIRQEMASRGLWDSFRQSERGEETIEERFEITGTMRRLADQSLPPNFSSLENFRAYVDGFEPNGCIEGKLSQMSKEVNARIEPFLKTTPRPLRLPDGPPCSQRSKFLLMDALKLSIEDPSHEGEGIPLYDAIKCMKTFFGWKEPNIIKPHEKGINPNYLLAWKQVLAELQDVENEEKIPKTKNMKKTSQLKWALGENMAPEKVDFEDCKDVSDLKQYDSDEPEPRSLASWIQSEFNKACELTDSSWIELDEIGEDVAPIEHIASMRRNYFTAEVSHCRATEYIMKGVYINTALLNASCAAMDDFQLIPMISKCRTKEGRRKTNLYGFIIKGRSHLRNDTDVVTFVSMEFSLTDPRLEPHKWERSCVLEIGDMLLRTAIGQAPRPTFLYVRTNGTSKIKMKWGMETRRCLPHLLQQIESMIEAESSVKEKDMTKEFFENKSETWPIGESPKGVEEGSIGKVCRTLLAKSVFNSLYASPQLEGFSAESRKLLLIVQALRDNLEPGTFNLGGLYEAIEECLINDPWVLLNASWFNSFLTHALK</sequence>
<evidence type="ECO:0000250" key="1">
    <source>
        <dbReference type="UniProtKB" id="P03433"/>
    </source>
</evidence>
<evidence type="ECO:0000255" key="2">
    <source>
        <dbReference type="HAMAP-Rule" id="MF_04063"/>
    </source>
</evidence>
<organismHost>
    <name type="scientific">Aves</name>
    <dbReference type="NCBI Taxonomy" id="8782"/>
</organismHost>
<organismHost>
    <name type="scientific">Homo sapiens</name>
    <name type="common">Human</name>
    <dbReference type="NCBI Taxonomy" id="9606"/>
</organismHost>
<name>PA_I78A3</name>
<keyword id="KW-1157">Cap snatching</keyword>
<keyword id="KW-0255">Endonuclease</keyword>
<keyword id="KW-1262">Eukaryotic host gene expression shutoff by virus</keyword>
<keyword id="KW-1191">Eukaryotic host transcription shutoff by virus</keyword>
<keyword id="KW-1035">Host cytoplasm</keyword>
<keyword id="KW-1190">Host gene expression shutoff by virus</keyword>
<keyword id="KW-1048">Host nucleus</keyword>
<keyword id="KW-0945">Host-virus interaction</keyword>
<keyword id="KW-0378">Hydrolase</keyword>
<keyword id="KW-1104">Inhibition of host RNA polymerase II by virus</keyword>
<keyword id="KW-0464">Manganese</keyword>
<keyword id="KW-0479">Metal-binding</keyword>
<keyword id="KW-0540">Nuclease</keyword>
<keyword id="KW-0597">Phosphoprotein</keyword>
<keyword id="KW-0688">Ribosomal frameshifting</keyword>